<reference key="1">
    <citation type="journal article" date="2005" name="BMC Genomics">
        <title>Characterization of 954 bovine full-CDS cDNA sequences.</title>
        <authorList>
            <person name="Harhay G.P."/>
            <person name="Sonstegard T.S."/>
            <person name="Keele J.W."/>
            <person name="Heaton M.P."/>
            <person name="Clawson M.L."/>
            <person name="Snelling W.M."/>
            <person name="Wiedmann R.T."/>
            <person name="Van Tassell C.P."/>
            <person name="Smith T.P.L."/>
        </authorList>
    </citation>
    <scope>NUCLEOTIDE SEQUENCE [LARGE SCALE MRNA]</scope>
</reference>
<reference key="2">
    <citation type="submission" date="2005-11" db="EMBL/GenBank/DDBJ databases">
        <authorList>
            <consortium name="NIH - Mammalian Gene Collection (MGC) project"/>
        </authorList>
    </citation>
    <scope>NUCLEOTIDE SEQUENCE [LARGE SCALE MRNA]</scope>
    <source>
        <strain>Crossbred X Angus</strain>
        <tissue>Liver</tissue>
    </source>
</reference>
<reference evidence="6" key="3">
    <citation type="journal article" date="2021" name="Cell">
        <title>De novo identification of mammalian ciliary motility proteins using cryo-EM.</title>
        <authorList>
            <person name="Gui M."/>
            <person name="Farley H."/>
            <person name="Anujan P."/>
            <person name="Anderson J.R."/>
            <person name="Maxwell D.W."/>
            <person name="Whitchurch J.B."/>
            <person name="Botsch J.J."/>
            <person name="Qiu T."/>
            <person name="Meleppattu S."/>
            <person name="Singh S.K."/>
            <person name="Zhang Q."/>
            <person name="Thompson J."/>
            <person name="Lucas J.S."/>
            <person name="Bingle C.D."/>
            <person name="Norris D.P."/>
            <person name="Roy S."/>
            <person name="Brown A."/>
        </authorList>
    </citation>
    <scope>STRUCTURE BY ELECTRON MICROSCOPY (3.40 ANGSTROMS)</scope>
    <scope>FUNCTION</scope>
    <scope>SUBCELLULAR LOCATION</scope>
    <scope>TISSUE SPECIFICITY</scope>
</reference>
<reference evidence="7" key="4">
    <citation type="journal article" date="2023" name="Cell">
        <title>Structural specializations of the sperm tail.</title>
        <authorList>
            <person name="Leung M.R."/>
            <person name="Zeng J."/>
            <person name="Wang X."/>
            <person name="Roelofs M.C."/>
            <person name="Huang W."/>
            <person name="Zenezini Chiozzi R."/>
            <person name="Hevler J.F."/>
            <person name="Heck A.J.R."/>
            <person name="Dutcher S.K."/>
            <person name="Brown A."/>
            <person name="Zhang R."/>
            <person name="Zeev-Ben-Mordehai T."/>
        </authorList>
    </citation>
    <scope>STRUCTURE BY ELECTRON MICROSCOPY (3.60 ANGSTROMS)</scope>
    <scope>FUNCTION</scope>
    <scope>SUBUNIT</scope>
    <scope>SUBCELLULAR LOCATION</scope>
</reference>
<proteinExistence type="evidence at protein level"/>
<organism>
    <name type="scientific">Bos taurus</name>
    <name type="common">Bovine</name>
    <dbReference type="NCBI Taxonomy" id="9913"/>
    <lineage>
        <taxon>Eukaryota</taxon>
        <taxon>Metazoa</taxon>
        <taxon>Chordata</taxon>
        <taxon>Craniata</taxon>
        <taxon>Vertebrata</taxon>
        <taxon>Euteleostomi</taxon>
        <taxon>Mammalia</taxon>
        <taxon>Eutheria</taxon>
        <taxon>Laurasiatheria</taxon>
        <taxon>Artiodactyla</taxon>
        <taxon>Ruminantia</taxon>
        <taxon>Pecora</taxon>
        <taxon>Bovidae</taxon>
        <taxon>Bovinae</taxon>
        <taxon>Bos</taxon>
    </lineage>
</organism>
<dbReference type="EC" id="3.1.-.-" evidence="1"/>
<dbReference type="EC" id="2.7.-.-" evidence="1"/>
<dbReference type="EMBL" id="BT020780">
    <property type="protein sequence ID" value="AAX08797.1"/>
    <property type="molecule type" value="mRNA"/>
</dbReference>
<dbReference type="EMBL" id="BC109996">
    <property type="protein sequence ID" value="AAI09997.1"/>
    <property type="molecule type" value="mRNA"/>
</dbReference>
<dbReference type="RefSeq" id="NP_001015656.1">
    <property type="nucleotide sequence ID" value="NM_001015656.1"/>
</dbReference>
<dbReference type="PDB" id="7RRO">
    <property type="method" value="EM"/>
    <property type="resolution" value="3.40 A"/>
    <property type="chains" value="5/6=1-377"/>
</dbReference>
<dbReference type="PDB" id="8OTZ">
    <property type="method" value="EM"/>
    <property type="resolution" value="3.60 A"/>
    <property type="chains" value="AV/AW=1-377"/>
</dbReference>
<dbReference type="PDB" id="9CPB">
    <property type="method" value="EM"/>
    <property type="resolution" value="3.52 A"/>
    <property type="chains" value="4I/4J=1-377"/>
</dbReference>
<dbReference type="PDBsum" id="7RRO"/>
<dbReference type="PDBsum" id="8OTZ"/>
<dbReference type="PDBsum" id="9CPB"/>
<dbReference type="EMDB" id="EMD-17187"/>
<dbReference type="EMDB" id="EMD-24664"/>
<dbReference type="EMDB" id="EMD-45801"/>
<dbReference type="EMDB" id="EMD-50664"/>
<dbReference type="SMR" id="Q5E9Y9"/>
<dbReference type="FunCoup" id="Q5E9Y9">
    <property type="interactions" value="751"/>
</dbReference>
<dbReference type="STRING" id="9913.ENSBTAP00000044149"/>
<dbReference type="PaxDb" id="9913-ENSBTAP00000044149"/>
<dbReference type="GeneID" id="534611"/>
<dbReference type="KEGG" id="bta:534611"/>
<dbReference type="CTD" id="29922"/>
<dbReference type="VEuPathDB" id="HostDB:ENSBTAG00000002689"/>
<dbReference type="eggNOG" id="KOG0888">
    <property type="taxonomic scope" value="Eukaryota"/>
</dbReference>
<dbReference type="HOGENOM" id="CLU_060216_3_1_1"/>
<dbReference type="InParanoid" id="Q5E9Y9"/>
<dbReference type="OMA" id="VCMCLEI"/>
<dbReference type="OrthoDB" id="270127at2759"/>
<dbReference type="TreeFam" id="TF106374"/>
<dbReference type="Reactome" id="R-BTA-380270">
    <property type="pathway name" value="Recruitment of mitotic centrosome proteins and complexes"/>
</dbReference>
<dbReference type="Reactome" id="R-BTA-380320">
    <property type="pathway name" value="Recruitment of NuMA to mitotic centrosomes"/>
</dbReference>
<dbReference type="Proteomes" id="UP000009136">
    <property type="component" value="Chromosome 16"/>
</dbReference>
<dbReference type="Bgee" id="ENSBTAG00000002689">
    <property type="expression patterns" value="Expressed in occipital lobe and 105 other cell types or tissues"/>
</dbReference>
<dbReference type="GO" id="GO:0160111">
    <property type="term" value="C:axonemal A tubule inner sheath"/>
    <property type="evidence" value="ECO:0000250"/>
    <property type="project" value="UniProtKB"/>
</dbReference>
<dbReference type="GO" id="GO:0005879">
    <property type="term" value="C:axonemal microtubule"/>
    <property type="evidence" value="ECO:0000314"/>
    <property type="project" value="UniProtKB"/>
</dbReference>
<dbReference type="GO" id="GO:0005813">
    <property type="term" value="C:centrosome"/>
    <property type="evidence" value="ECO:0000250"/>
    <property type="project" value="UniProtKB"/>
</dbReference>
<dbReference type="GO" id="GO:0000931">
    <property type="term" value="C:gamma-tubulin ring complex"/>
    <property type="evidence" value="ECO:0000250"/>
    <property type="project" value="UniProtKB"/>
</dbReference>
<dbReference type="GO" id="GO:0005634">
    <property type="term" value="C:nucleus"/>
    <property type="evidence" value="ECO:0000250"/>
    <property type="project" value="UniProtKB"/>
</dbReference>
<dbReference type="GO" id="GO:0036126">
    <property type="term" value="C:sperm flagellum"/>
    <property type="evidence" value="ECO:0000250"/>
    <property type="project" value="UniProtKB"/>
</dbReference>
<dbReference type="GO" id="GO:0005819">
    <property type="term" value="C:spindle"/>
    <property type="evidence" value="ECO:0007669"/>
    <property type="project" value="UniProtKB-SubCell"/>
</dbReference>
<dbReference type="GO" id="GO:0008408">
    <property type="term" value="F:3'-5' exonuclease activity"/>
    <property type="evidence" value="ECO:0000250"/>
    <property type="project" value="UniProtKB"/>
</dbReference>
<dbReference type="GO" id="GO:0005524">
    <property type="term" value="F:ATP binding"/>
    <property type="evidence" value="ECO:0007669"/>
    <property type="project" value="InterPro"/>
</dbReference>
<dbReference type="GO" id="GO:0004550">
    <property type="term" value="F:nucleoside diphosphate kinase activity"/>
    <property type="evidence" value="ECO:0007669"/>
    <property type="project" value="UniProtKB-EC"/>
</dbReference>
<dbReference type="GO" id="GO:0006241">
    <property type="term" value="P:CTP biosynthetic process"/>
    <property type="evidence" value="ECO:0007669"/>
    <property type="project" value="InterPro"/>
</dbReference>
<dbReference type="GO" id="GO:0030317">
    <property type="term" value="P:flagellated sperm motility"/>
    <property type="evidence" value="ECO:0000250"/>
    <property type="project" value="UniProtKB"/>
</dbReference>
<dbReference type="GO" id="GO:0006183">
    <property type="term" value="P:GTP biosynthetic process"/>
    <property type="evidence" value="ECO:0007669"/>
    <property type="project" value="InterPro"/>
</dbReference>
<dbReference type="GO" id="GO:0006228">
    <property type="term" value="P:UTP biosynthetic process"/>
    <property type="evidence" value="ECO:0007669"/>
    <property type="project" value="InterPro"/>
</dbReference>
<dbReference type="CDD" id="cd04415">
    <property type="entry name" value="NDPk7A"/>
    <property type="match status" value="1"/>
</dbReference>
<dbReference type="CDD" id="cd04412">
    <property type="entry name" value="NDPk7B"/>
    <property type="match status" value="1"/>
</dbReference>
<dbReference type="FunFam" id="2.30.29.170:FF:000005">
    <property type="entry name" value="Nucleoside diphosphate kinase 7"/>
    <property type="match status" value="1"/>
</dbReference>
<dbReference type="FunFam" id="3.30.70.141:FF:000004">
    <property type="entry name" value="Nucleoside diphosphate kinase 7"/>
    <property type="match status" value="1"/>
</dbReference>
<dbReference type="FunFam" id="3.30.70.141:FF:000010">
    <property type="entry name" value="Nucleoside diphosphate kinase 7"/>
    <property type="match status" value="1"/>
</dbReference>
<dbReference type="Gene3D" id="2.30.29.170">
    <property type="match status" value="1"/>
</dbReference>
<dbReference type="Gene3D" id="3.30.70.141">
    <property type="entry name" value="Nucleoside diphosphate kinase-like domain"/>
    <property type="match status" value="2"/>
</dbReference>
<dbReference type="InterPro" id="IPR006602">
    <property type="entry name" value="DM10_dom"/>
</dbReference>
<dbReference type="InterPro" id="IPR034907">
    <property type="entry name" value="NDK-like_dom"/>
</dbReference>
<dbReference type="InterPro" id="IPR036850">
    <property type="entry name" value="NDK-like_dom_sf"/>
</dbReference>
<dbReference type="InterPro" id="IPR011410">
    <property type="entry name" value="NDPK7"/>
</dbReference>
<dbReference type="InterPro" id="IPR035525">
    <property type="entry name" value="NDPk7A"/>
</dbReference>
<dbReference type="InterPro" id="IPR037993">
    <property type="entry name" value="NDPk7B"/>
</dbReference>
<dbReference type="InterPro" id="IPR001564">
    <property type="entry name" value="Nucleoside_diP_kinase"/>
</dbReference>
<dbReference type="PANTHER" id="PTHR43109">
    <property type="entry name" value="NUCLEOSIDE DIPHOSPHATE KINASE 7"/>
    <property type="match status" value="1"/>
</dbReference>
<dbReference type="PANTHER" id="PTHR43109:SF2">
    <property type="entry name" value="NUCLEOSIDE DIPHOSPHATE KINASE 7"/>
    <property type="match status" value="1"/>
</dbReference>
<dbReference type="Pfam" id="PF00334">
    <property type="entry name" value="NDK"/>
    <property type="match status" value="2"/>
</dbReference>
<dbReference type="Pfam" id="PF25364">
    <property type="entry name" value="PH_NDK7_N"/>
    <property type="match status" value="1"/>
</dbReference>
<dbReference type="PIRSF" id="PIRSF036503">
    <property type="entry name" value="NDK7"/>
    <property type="match status" value="1"/>
</dbReference>
<dbReference type="PRINTS" id="PR01243">
    <property type="entry name" value="NUCDPKINASE"/>
</dbReference>
<dbReference type="SMART" id="SM00676">
    <property type="entry name" value="DM10"/>
    <property type="match status" value="1"/>
</dbReference>
<dbReference type="SMART" id="SM00562">
    <property type="entry name" value="NDK"/>
    <property type="match status" value="2"/>
</dbReference>
<dbReference type="SUPFAM" id="SSF54919">
    <property type="entry name" value="Nucleoside diphosphate kinase, NDK"/>
    <property type="match status" value="2"/>
</dbReference>
<dbReference type="PROSITE" id="PS51336">
    <property type="entry name" value="DM10"/>
    <property type="match status" value="1"/>
</dbReference>
<dbReference type="PROSITE" id="PS51374">
    <property type="entry name" value="NDPK_LIKE"/>
    <property type="match status" value="2"/>
</dbReference>
<gene>
    <name type="primary">NME7</name>
</gene>
<accession>Q5E9Y9</accession>
<evidence type="ECO:0000250" key="1">
    <source>
        <dbReference type="UniProtKB" id="Q9Y5B8"/>
    </source>
</evidence>
<evidence type="ECO:0000255" key="2">
    <source>
        <dbReference type="PROSITE-ProRule" id="PRU00665"/>
    </source>
</evidence>
<evidence type="ECO:0000269" key="3">
    <source>
    </source>
</evidence>
<evidence type="ECO:0000269" key="4">
    <source>
    </source>
</evidence>
<evidence type="ECO:0000305" key="5"/>
<evidence type="ECO:0007744" key="6">
    <source>
        <dbReference type="PDB" id="7RRO"/>
    </source>
</evidence>
<evidence type="ECO:0007744" key="7">
    <source>
        <dbReference type="PDB" id="8OTZ"/>
    </source>
</evidence>
<comment type="function">
    <text evidence="1 3 4">Possesses an intrinsic kinase activity. Displays 3'-5' exonuclease activity with a preference for single-stranded DNA (By similarity). Does not seem to have nucleoside diphosphate kinase activity (By similarity). Functional component of the gamma-tubulin ring complex, implicated in the regulation of the microtubule-nucleating activity of the gamma-tubulin ring complex in centrosomes, in a kinase activity-dependent manner (By similarity). Part of the dynein-decorated doublet microtubules (DMTs) in cilia axoneme, which is required for motile cilia beating (PubMed:34715025, PubMed:37327785).</text>
</comment>
<comment type="subunit">
    <text evidence="1 4">Component of sperm flagellar doublet microtubules (PubMed:37327785). Component of the gamma-tubulin ring complex (By similarity).</text>
</comment>
<comment type="subcellular location">
    <subcellularLocation>
        <location evidence="1">Cytoplasm</location>
        <location evidence="1">Cytoskeleton</location>
        <location evidence="1">Microtubule organizing center</location>
        <location evidence="1">Centrosome</location>
    </subcellularLocation>
    <subcellularLocation>
        <location evidence="1">Nucleus</location>
    </subcellularLocation>
    <subcellularLocation>
        <location evidence="1">Cytoplasm</location>
    </subcellularLocation>
    <subcellularLocation>
        <location evidence="1">Cytoplasm</location>
        <location evidence="1">Cytoskeleton</location>
        <location evidence="1">Spindle</location>
    </subcellularLocation>
    <subcellularLocation>
        <location evidence="3">Cytoplasm</location>
        <location evidence="3">Cytoskeleton</location>
        <location evidence="3">Cilium axoneme</location>
    </subcellularLocation>
    <subcellularLocation>
        <location evidence="4">Cytoplasm</location>
        <location evidence="4">Cytoskeleton</location>
        <location evidence="4">Flagellum axoneme</location>
    </subcellularLocation>
    <subcellularLocation>
        <location evidence="1">Cell projection</location>
        <location evidence="1">Cilium</location>
    </subcellularLocation>
    <text evidence="1">Localizes to centrosomes through its assembly into gamma-tubulin ring complex. The centrosomal content of NME7 varies during the cell cycle, being highest in mitosis and lowest in early G1.</text>
</comment>
<comment type="tissue specificity">
    <text evidence="3">Expressed in trachea multiciliated cells.</text>
</comment>
<comment type="domain">
    <text evidence="1">Contains 2 putative kinase domains (92-225 and 241-373 AA), the first one is involved in autophosphorylation and the other may be inactive.</text>
</comment>
<comment type="similarity">
    <text evidence="5">Belongs to the NDK family.</text>
</comment>
<name>NDK7_BOVIN</name>
<sequence>MNHSERFVFIAEWFDPNASLFRRYELLFYPGDGSVEMHDVKNHRTFLKRTKYEDLHLEDLFIGNKVNIFSRQLVLLDYGDQYTARQLGSKKEKTLALIKPDAVSKAGEIIEIINKAGFTLTKLKMMTLSRKEATDFHIDHQSRPFLNELIQFITSGPIIAMEILRDDAVCEWKRLLGPANSGLARTDAPESIRALFGTDGIKNAAHGPDSFACAAREMELFFPSSGVCGPANTAKFTNCTTCCIVKPHAVSEGLLGKILMTIRDAGFEISAMQMFNMDRINVEEFYEVYKGVVSEYNEMVTEMYSGPCVAMEIQQTNPTMTFREFCGPADPEIARHLRPGTLRAIFGKTKIQNAVHCTDLPEDGLLEVQYFFKILDN</sequence>
<keyword id="KW-0002">3D-structure</keyword>
<keyword id="KW-0966">Cell projection</keyword>
<keyword id="KW-0969">Cilium</keyword>
<keyword id="KW-0963">Cytoplasm</keyword>
<keyword id="KW-0206">Cytoskeleton</keyword>
<keyword id="KW-0282">Flagellum</keyword>
<keyword id="KW-0378">Hydrolase</keyword>
<keyword id="KW-0418">Kinase</keyword>
<keyword id="KW-0539">Nucleus</keyword>
<keyword id="KW-1185">Reference proteome</keyword>
<keyword id="KW-0808">Transferase</keyword>
<protein>
    <recommendedName>
        <fullName>Nucleoside diphosphate kinase homolog 7</fullName>
        <shortName>NDK 7</shortName>
        <shortName>NDP kinase homolog 7</shortName>
    </recommendedName>
    <alternativeName>
        <fullName>3'-5' exonuclease NME7</fullName>
        <ecNumber evidence="1">3.1.-.-</ecNumber>
    </alternativeName>
    <alternativeName>
        <fullName>Protein kinase NME7</fullName>
        <ecNumber evidence="1">2.7.-.-</ecNumber>
    </alternativeName>
    <alternativeName>
        <fullName>nm23-H7</fullName>
    </alternativeName>
</protein>
<feature type="chain" id="PRO_0000245168" description="Nucleoside diphosphate kinase homolog 7">
    <location>
        <begin position="1"/>
        <end position="377"/>
    </location>
</feature>
<feature type="domain" description="DM10" evidence="2">
    <location>
        <begin position="3"/>
        <end position="91"/>
    </location>
</feature>